<sequence length="106" mass="12032">MTASIAQQKIRIRLKAFDRRMLDLSCDKIIQTADTTSASAIGPIPLPTKRKIYCVLRSPHVDKDSREHFETRTHRRIIDIYSPSAKTIDALMKLDLPSGVDIEVKL</sequence>
<keyword id="KW-0687">Ribonucleoprotein</keyword>
<keyword id="KW-0689">Ribosomal protein</keyword>
<name>RS10_PROMS</name>
<accession>A2BT82</accession>
<dbReference type="EMBL" id="CP000551">
    <property type="protein sequence ID" value="ABM70993.1"/>
    <property type="molecule type" value="Genomic_DNA"/>
</dbReference>
<dbReference type="RefSeq" id="WP_002807536.1">
    <property type="nucleotide sequence ID" value="NC_008816.1"/>
</dbReference>
<dbReference type="SMR" id="A2BT82"/>
<dbReference type="STRING" id="146891.A9601_17101"/>
<dbReference type="KEGG" id="pmb:A9601_17101"/>
<dbReference type="eggNOG" id="COG0051">
    <property type="taxonomic scope" value="Bacteria"/>
</dbReference>
<dbReference type="HOGENOM" id="CLU_122625_1_3_3"/>
<dbReference type="OrthoDB" id="9804464at2"/>
<dbReference type="Proteomes" id="UP000002590">
    <property type="component" value="Chromosome"/>
</dbReference>
<dbReference type="GO" id="GO:1990904">
    <property type="term" value="C:ribonucleoprotein complex"/>
    <property type="evidence" value="ECO:0007669"/>
    <property type="project" value="UniProtKB-KW"/>
</dbReference>
<dbReference type="GO" id="GO:0005840">
    <property type="term" value="C:ribosome"/>
    <property type="evidence" value="ECO:0007669"/>
    <property type="project" value="UniProtKB-KW"/>
</dbReference>
<dbReference type="GO" id="GO:0003735">
    <property type="term" value="F:structural constituent of ribosome"/>
    <property type="evidence" value="ECO:0007669"/>
    <property type="project" value="InterPro"/>
</dbReference>
<dbReference type="GO" id="GO:0000049">
    <property type="term" value="F:tRNA binding"/>
    <property type="evidence" value="ECO:0007669"/>
    <property type="project" value="UniProtKB-UniRule"/>
</dbReference>
<dbReference type="GO" id="GO:0006412">
    <property type="term" value="P:translation"/>
    <property type="evidence" value="ECO:0007669"/>
    <property type="project" value="UniProtKB-UniRule"/>
</dbReference>
<dbReference type="FunFam" id="3.30.70.600:FF:000001">
    <property type="entry name" value="30S ribosomal protein S10"/>
    <property type="match status" value="1"/>
</dbReference>
<dbReference type="Gene3D" id="3.30.70.600">
    <property type="entry name" value="Ribosomal protein S10 domain"/>
    <property type="match status" value="1"/>
</dbReference>
<dbReference type="HAMAP" id="MF_00508">
    <property type="entry name" value="Ribosomal_uS10"/>
    <property type="match status" value="1"/>
</dbReference>
<dbReference type="InterPro" id="IPR001848">
    <property type="entry name" value="Ribosomal_uS10"/>
</dbReference>
<dbReference type="InterPro" id="IPR018268">
    <property type="entry name" value="Ribosomal_uS10_CS"/>
</dbReference>
<dbReference type="InterPro" id="IPR027486">
    <property type="entry name" value="Ribosomal_uS10_dom"/>
</dbReference>
<dbReference type="InterPro" id="IPR036838">
    <property type="entry name" value="Ribosomal_uS10_dom_sf"/>
</dbReference>
<dbReference type="NCBIfam" id="NF001861">
    <property type="entry name" value="PRK00596.1"/>
    <property type="match status" value="1"/>
</dbReference>
<dbReference type="NCBIfam" id="TIGR01049">
    <property type="entry name" value="rpsJ_bact"/>
    <property type="match status" value="1"/>
</dbReference>
<dbReference type="PANTHER" id="PTHR11700">
    <property type="entry name" value="30S RIBOSOMAL PROTEIN S10 FAMILY MEMBER"/>
    <property type="match status" value="1"/>
</dbReference>
<dbReference type="Pfam" id="PF00338">
    <property type="entry name" value="Ribosomal_S10"/>
    <property type="match status" value="1"/>
</dbReference>
<dbReference type="PRINTS" id="PR00971">
    <property type="entry name" value="RIBOSOMALS10"/>
</dbReference>
<dbReference type="SMART" id="SM01403">
    <property type="entry name" value="Ribosomal_S10"/>
    <property type="match status" value="1"/>
</dbReference>
<dbReference type="SUPFAM" id="SSF54999">
    <property type="entry name" value="Ribosomal protein S10"/>
    <property type="match status" value="1"/>
</dbReference>
<dbReference type="PROSITE" id="PS00361">
    <property type="entry name" value="RIBOSOMAL_S10"/>
    <property type="match status" value="1"/>
</dbReference>
<feature type="chain" id="PRO_1000015082" description="Small ribosomal subunit protein uS10">
    <location>
        <begin position="1"/>
        <end position="106"/>
    </location>
</feature>
<reference key="1">
    <citation type="journal article" date="2007" name="PLoS Genet.">
        <title>Patterns and implications of gene gain and loss in the evolution of Prochlorococcus.</title>
        <authorList>
            <person name="Kettler G.C."/>
            <person name="Martiny A.C."/>
            <person name="Huang K."/>
            <person name="Zucker J."/>
            <person name="Coleman M.L."/>
            <person name="Rodrigue S."/>
            <person name="Chen F."/>
            <person name="Lapidus A."/>
            <person name="Ferriera S."/>
            <person name="Johnson J."/>
            <person name="Steglich C."/>
            <person name="Church G.M."/>
            <person name="Richardson P."/>
            <person name="Chisholm S.W."/>
        </authorList>
    </citation>
    <scope>NUCLEOTIDE SEQUENCE [LARGE SCALE GENOMIC DNA]</scope>
    <source>
        <strain>AS9601</strain>
    </source>
</reference>
<comment type="function">
    <text evidence="1">Involved in the binding of tRNA to the ribosomes.</text>
</comment>
<comment type="subunit">
    <text evidence="1">Part of the 30S ribosomal subunit.</text>
</comment>
<comment type="similarity">
    <text evidence="1">Belongs to the universal ribosomal protein uS10 family.</text>
</comment>
<organism>
    <name type="scientific">Prochlorococcus marinus (strain AS9601)</name>
    <dbReference type="NCBI Taxonomy" id="146891"/>
    <lineage>
        <taxon>Bacteria</taxon>
        <taxon>Bacillati</taxon>
        <taxon>Cyanobacteriota</taxon>
        <taxon>Cyanophyceae</taxon>
        <taxon>Synechococcales</taxon>
        <taxon>Prochlorococcaceae</taxon>
        <taxon>Prochlorococcus</taxon>
    </lineage>
</organism>
<protein>
    <recommendedName>
        <fullName evidence="1">Small ribosomal subunit protein uS10</fullName>
    </recommendedName>
    <alternativeName>
        <fullName evidence="2">30S ribosomal protein S10</fullName>
    </alternativeName>
</protein>
<evidence type="ECO:0000255" key="1">
    <source>
        <dbReference type="HAMAP-Rule" id="MF_00508"/>
    </source>
</evidence>
<evidence type="ECO:0000305" key="2"/>
<gene>
    <name evidence="1" type="primary">rpsJ</name>
    <name evidence="1" type="synonym">rps10</name>
    <name type="ordered locus">A9601_17101</name>
</gene>
<proteinExistence type="inferred from homology"/>